<proteinExistence type="inferred from homology"/>
<feature type="chain" id="PRO_0000263898" description="Translation initiation factor IF-1">
    <location>
        <begin position="1"/>
        <end position="72"/>
    </location>
</feature>
<feature type="domain" description="S1-like" evidence="1">
    <location>
        <begin position="1"/>
        <end position="72"/>
    </location>
</feature>
<name>IF1_XANE5</name>
<evidence type="ECO:0000255" key="1">
    <source>
        <dbReference type="HAMAP-Rule" id="MF_00075"/>
    </source>
</evidence>
<comment type="function">
    <text evidence="1">One of the essential components for the initiation of protein synthesis. Stabilizes the binding of IF-2 and IF-3 on the 30S subunit to which N-formylmethionyl-tRNA(fMet) subsequently binds. Helps modulate mRNA selection, yielding the 30S pre-initiation complex (PIC). Upon addition of the 50S ribosomal subunit IF-1, IF-2 and IF-3 are released leaving the mature 70S translation initiation complex.</text>
</comment>
<comment type="subunit">
    <text evidence="1">Component of the 30S ribosomal translation pre-initiation complex which assembles on the 30S ribosome in the order IF-2 and IF-3, IF-1 and N-formylmethionyl-tRNA(fMet); mRNA recruitment can occur at any time during PIC assembly.</text>
</comment>
<comment type="subcellular location">
    <subcellularLocation>
        <location evidence="1">Cytoplasm</location>
    </subcellularLocation>
</comment>
<comment type="similarity">
    <text evidence="1">Belongs to the IF-1 family.</text>
</comment>
<accession>Q3BTY1</accession>
<sequence>MSKDDSIEFEGSVSETLPNTTFRVKLENGHEIIAHISGRMRKNYIRILTGDRVKVEMTPYDLTKGRITYRMK</sequence>
<dbReference type="EMBL" id="AM039952">
    <property type="protein sequence ID" value="CAJ23728.1"/>
    <property type="molecule type" value="Genomic_DNA"/>
</dbReference>
<dbReference type="RefSeq" id="WP_002813418.1">
    <property type="nucleotide sequence ID" value="NZ_CP017190.1"/>
</dbReference>
<dbReference type="SMR" id="Q3BTY1"/>
<dbReference type="STRING" id="456327.BJD11_12175"/>
<dbReference type="GeneID" id="97510368"/>
<dbReference type="KEGG" id="xcv:XCV2051"/>
<dbReference type="eggNOG" id="COG0361">
    <property type="taxonomic scope" value="Bacteria"/>
</dbReference>
<dbReference type="HOGENOM" id="CLU_151267_1_0_6"/>
<dbReference type="Proteomes" id="UP000007069">
    <property type="component" value="Chromosome"/>
</dbReference>
<dbReference type="GO" id="GO:0005829">
    <property type="term" value="C:cytosol"/>
    <property type="evidence" value="ECO:0007669"/>
    <property type="project" value="TreeGrafter"/>
</dbReference>
<dbReference type="GO" id="GO:0043022">
    <property type="term" value="F:ribosome binding"/>
    <property type="evidence" value="ECO:0007669"/>
    <property type="project" value="UniProtKB-UniRule"/>
</dbReference>
<dbReference type="GO" id="GO:0019843">
    <property type="term" value="F:rRNA binding"/>
    <property type="evidence" value="ECO:0007669"/>
    <property type="project" value="UniProtKB-UniRule"/>
</dbReference>
<dbReference type="GO" id="GO:0003743">
    <property type="term" value="F:translation initiation factor activity"/>
    <property type="evidence" value="ECO:0007669"/>
    <property type="project" value="UniProtKB-UniRule"/>
</dbReference>
<dbReference type="CDD" id="cd04451">
    <property type="entry name" value="S1_IF1"/>
    <property type="match status" value="1"/>
</dbReference>
<dbReference type="FunFam" id="2.40.50.140:FF:000002">
    <property type="entry name" value="Translation initiation factor IF-1"/>
    <property type="match status" value="1"/>
</dbReference>
<dbReference type="Gene3D" id="2.40.50.140">
    <property type="entry name" value="Nucleic acid-binding proteins"/>
    <property type="match status" value="1"/>
</dbReference>
<dbReference type="HAMAP" id="MF_00075">
    <property type="entry name" value="IF_1"/>
    <property type="match status" value="1"/>
</dbReference>
<dbReference type="InterPro" id="IPR012340">
    <property type="entry name" value="NA-bd_OB-fold"/>
</dbReference>
<dbReference type="InterPro" id="IPR006196">
    <property type="entry name" value="RNA-binding_domain_S1_IF1"/>
</dbReference>
<dbReference type="InterPro" id="IPR003029">
    <property type="entry name" value="S1_domain"/>
</dbReference>
<dbReference type="InterPro" id="IPR004368">
    <property type="entry name" value="TIF_IF1"/>
</dbReference>
<dbReference type="NCBIfam" id="TIGR00008">
    <property type="entry name" value="infA"/>
    <property type="match status" value="1"/>
</dbReference>
<dbReference type="PANTHER" id="PTHR33370">
    <property type="entry name" value="TRANSLATION INITIATION FACTOR IF-1, CHLOROPLASTIC"/>
    <property type="match status" value="1"/>
</dbReference>
<dbReference type="PANTHER" id="PTHR33370:SF1">
    <property type="entry name" value="TRANSLATION INITIATION FACTOR IF-1, CHLOROPLASTIC"/>
    <property type="match status" value="1"/>
</dbReference>
<dbReference type="Pfam" id="PF01176">
    <property type="entry name" value="eIF-1a"/>
    <property type="match status" value="1"/>
</dbReference>
<dbReference type="SMART" id="SM00316">
    <property type="entry name" value="S1"/>
    <property type="match status" value="1"/>
</dbReference>
<dbReference type="SUPFAM" id="SSF50249">
    <property type="entry name" value="Nucleic acid-binding proteins"/>
    <property type="match status" value="1"/>
</dbReference>
<dbReference type="PROSITE" id="PS50832">
    <property type="entry name" value="S1_IF1_TYPE"/>
    <property type="match status" value="1"/>
</dbReference>
<organism>
    <name type="scientific">Xanthomonas euvesicatoria pv. vesicatoria (strain 85-10)</name>
    <name type="common">Xanthomonas campestris pv. vesicatoria</name>
    <dbReference type="NCBI Taxonomy" id="316273"/>
    <lineage>
        <taxon>Bacteria</taxon>
        <taxon>Pseudomonadati</taxon>
        <taxon>Pseudomonadota</taxon>
        <taxon>Gammaproteobacteria</taxon>
        <taxon>Lysobacterales</taxon>
        <taxon>Lysobacteraceae</taxon>
        <taxon>Xanthomonas</taxon>
    </lineage>
</organism>
<protein>
    <recommendedName>
        <fullName evidence="1">Translation initiation factor IF-1</fullName>
    </recommendedName>
</protein>
<gene>
    <name evidence="1" type="primary">infA</name>
    <name type="ordered locus">XCV2051</name>
</gene>
<reference key="1">
    <citation type="journal article" date="2005" name="J. Bacteriol.">
        <title>Insights into genome plasticity and pathogenicity of the plant pathogenic Bacterium Xanthomonas campestris pv. vesicatoria revealed by the complete genome sequence.</title>
        <authorList>
            <person name="Thieme F."/>
            <person name="Koebnik R."/>
            <person name="Bekel T."/>
            <person name="Berger C."/>
            <person name="Boch J."/>
            <person name="Buettner D."/>
            <person name="Caldana C."/>
            <person name="Gaigalat L."/>
            <person name="Goesmann A."/>
            <person name="Kay S."/>
            <person name="Kirchner O."/>
            <person name="Lanz C."/>
            <person name="Linke B."/>
            <person name="McHardy A.C."/>
            <person name="Meyer F."/>
            <person name="Mittenhuber G."/>
            <person name="Nies D.H."/>
            <person name="Niesbach-Kloesgen U."/>
            <person name="Patschkowski T."/>
            <person name="Rueckert C."/>
            <person name="Rupp O."/>
            <person name="Schneiker S."/>
            <person name="Schuster S.C."/>
            <person name="Vorhoelter F.J."/>
            <person name="Weber E."/>
            <person name="Puehler A."/>
            <person name="Bonas U."/>
            <person name="Bartels D."/>
            <person name="Kaiser O."/>
        </authorList>
    </citation>
    <scope>NUCLEOTIDE SEQUENCE [LARGE SCALE GENOMIC DNA]</scope>
    <source>
        <strain>85-10</strain>
    </source>
</reference>
<keyword id="KW-0963">Cytoplasm</keyword>
<keyword id="KW-0396">Initiation factor</keyword>
<keyword id="KW-0648">Protein biosynthesis</keyword>
<keyword id="KW-0694">RNA-binding</keyword>
<keyword id="KW-0699">rRNA-binding</keyword>